<gene>
    <name type="primary">WEE2</name>
    <name type="synonym">WEE1B</name>
</gene>
<keyword id="KW-0067">ATP-binding</keyword>
<keyword id="KW-0175">Coiled coil</keyword>
<keyword id="KW-0418">Kinase</keyword>
<keyword id="KW-0460">Magnesium</keyword>
<keyword id="KW-0469">Meiosis</keyword>
<keyword id="KW-0479">Metal-binding</keyword>
<keyword id="KW-0547">Nucleotide-binding</keyword>
<keyword id="KW-0539">Nucleus</keyword>
<keyword id="KW-0597">Phosphoprotein</keyword>
<keyword id="KW-1185">Reference proteome</keyword>
<keyword id="KW-0808">Transferase</keyword>
<keyword id="KW-0829">Tyrosine-protein kinase</keyword>
<proteinExistence type="evidence at protein level"/>
<accession>A4PES0</accession>
<reference key="1">
    <citation type="journal article" date="2009" name="Cell Cycle">
        <title>Critical effect of pigWee1B on the regulation of meiotic resumption in porcine immature oocytes.</title>
        <authorList>
            <person name="Shimaoka T."/>
            <person name="Nishimura T."/>
            <person name="Kano K."/>
            <person name="Naito K."/>
        </authorList>
    </citation>
    <scope>NUCLEOTIDE SEQUENCE [MRNA]</scope>
    <scope>FUNCTION</scope>
    <scope>TISSUE SPECIFICITY</scope>
    <scope>DEVELOPMENTAL STAGE</scope>
</reference>
<reference key="2">
    <citation type="journal article" date="2009" name="J. Reprod. Dev.">
        <title>Insufficient amount of Cdc2 and continuous activation of Wee1 B are the cause of meiotic failure in porcine growing oocytes.</title>
        <authorList>
            <person name="Nishimura T."/>
            <person name="Shimaoka T."/>
            <person name="Kano K."/>
            <person name="Naito K."/>
        </authorList>
    </citation>
    <scope>INVOLVEMENT IN SMALL OOCYTES</scope>
</reference>
<reference key="3">
    <citation type="journal article" date="2011" name="J. Reprod. Dev.">
        <title>Analyses of the regulatory mechanism of porcine WEE1B: the phosphorylation sites of porcine WEE1B and mouse WEE1B are different.</title>
        <authorList>
            <person name="Shimaoka T."/>
            <person name="Nishimura T."/>
            <person name="Kano K."/>
            <person name="Naito K."/>
        </authorList>
    </citation>
    <scope>SUBCELLULAR LOCATION</scope>
    <scope>PHOSPHORYLATION AT SER-77</scope>
    <scope>MUTAGENESIS OF SER-77; SER-118; SER-133; SER-149 AND 174-ARG-LYS-175</scope>
</reference>
<dbReference type="EC" id="2.7.10.2"/>
<dbReference type="EMBL" id="AB276373">
    <property type="protein sequence ID" value="BAF56108.1"/>
    <property type="status" value="ALT_INIT"/>
    <property type="molecule type" value="mRNA"/>
</dbReference>
<dbReference type="RefSeq" id="NP_001090976.2">
    <property type="nucleotide sequence ID" value="NM_001097507.2"/>
</dbReference>
<dbReference type="RefSeq" id="XP_005673170.1">
    <property type="nucleotide sequence ID" value="XM_005673113.2"/>
</dbReference>
<dbReference type="SMR" id="A4PES0"/>
<dbReference type="FunCoup" id="A4PES0">
    <property type="interactions" value="349"/>
</dbReference>
<dbReference type="STRING" id="9823.ENSSSCP00000017471"/>
<dbReference type="iPTMnet" id="A4PES0"/>
<dbReference type="PaxDb" id="9823-ENSSSCP00000017471"/>
<dbReference type="Ensembl" id="ENSSSCT00025041339.1">
    <property type="protein sequence ID" value="ENSSSCP00025017581.1"/>
    <property type="gene ID" value="ENSSSCG00025030428.1"/>
</dbReference>
<dbReference type="Ensembl" id="ENSSSCT00070043086.1">
    <property type="protein sequence ID" value="ENSSSCP00070036248.1"/>
    <property type="gene ID" value="ENSSSCG00070021693.1"/>
</dbReference>
<dbReference type="Ensembl" id="ENSSSCT00115030016">
    <property type="protein sequence ID" value="ENSSSCP00115028517"/>
    <property type="gene ID" value="ENSSSCG00115017069"/>
</dbReference>
<dbReference type="GeneID" id="100048934"/>
<dbReference type="KEGG" id="ssc:100048934"/>
<dbReference type="CTD" id="494551"/>
<dbReference type="eggNOG" id="KOG0601">
    <property type="taxonomic scope" value="Eukaryota"/>
</dbReference>
<dbReference type="HOGENOM" id="CLU_000288_25_1_1"/>
<dbReference type="InParanoid" id="A4PES0"/>
<dbReference type="OrthoDB" id="5337378at2759"/>
<dbReference type="TreeFam" id="TF101088"/>
<dbReference type="Proteomes" id="UP000008227">
    <property type="component" value="Unplaced"/>
</dbReference>
<dbReference type="Proteomes" id="UP000314985">
    <property type="component" value="Chromosome 18"/>
</dbReference>
<dbReference type="Proteomes" id="UP000694570">
    <property type="component" value="Unplaced"/>
</dbReference>
<dbReference type="Proteomes" id="UP000694571">
    <property type="component" value="Unplaced"/>
</dbReference>
<dbReference type="Proteomes" id="UP000694720">
    <property type="component" value="Unplaced"/>
</dbReference>
<dbReference type="Proteomes" id="UP000694722">
    <property type="component" value="Unplaced"/>
</dbReference>
<dbReference type="Proteomes" id="UP000694723">
    <property type="component" value="Unplaced"/>
</dbReference>
<dbReference type="Proteomes" id="UP000694724">
    <property type="component" value="Unplaced"/>
</dbReference>
<dbReference type="Proteomes" id="UP000694725">
    <property type="component" value="Unplaced"/>
</dbReference>
<dbReference type="Proteomes" id="UP000694726">
    <property type="component" value="Unplaced"/>
</dbReference>
<dbReference type="Proteomes" id="UP000694727">
    <property type="component" value="Unplaced"/>
</dbReference>
<dbReference type="Proteomes" id="UP000694728">
    <property type="component" value="Unplaced"/>
</dbReference>
<dbReference type="GO" id="GO:0005737">
    <property type="term" value="C:cytoplasm"/>
    <property type="evidence" value="ECO:0000318"/>
    <property type="project" value="GO_Central"/>
</dbReference>
<dbReference type="GO" id="GO:0005634">
    <property type="term" value="C:nucleus"/>
    <property type="evidence" value="ECO:0000314"/>
    <property type="project" value="UniProtKB"/>
</dbReference>
<dbReference type="GO" id="GO:0005524">
    <property type="term" value="F:ATP binding"/>
    <property type="evidence" value="ECO:0007669"/>
    <property type="project" value="UniProtKB-KW"/>
</dbReference>
<dbReference type="GO" id="GO:0000287">
    <property type="term" value="F:magnesium ion binding"/>
    <property type="evidence" value="ECO:0007669"/>
    <property type="project" value="InterPro"/>
</dbReference>
<dbReference type="GO" id="GO:0004715">
    <property type="term" value="F:non-membrane spanning protein tyrosine kinase activity"/>
    <property type="evidence" value="ECO:0007669"/>
    <property type="project" value="UniProtKB-EC"/>
</dbReference>
<dbReference type="GO" id="GO:0004713">
    <property type="term" value="F:protein tyrosine kinase activity"/>
    <property type="evidence" value="ECO:0000318"/>
    <property type="project" value="GO_Central"/>
</dbReference>
<dbReference type="GO" id="GO:0007143">
    <property type="term" value="P:female meiotic nuclear division"/>
    <property type="evidence" value="ECO:0000314"/>
    <property type="project" value="UniProtKB"/>
</dbReference>
<dbReference type="GO" id="GO:0000278">
    <property type="term" value="P:mitotic cell cycle"/>
    <property type="evidence" value="ECO:0007669"/>
    <property type="project" value="InterPro"/>
</dbReference>
<dbReference type="GO" id="GO:1904145">
    <property type="term" value="P:negative regulation of meiotic cell cycle process involved in oocyte maturation"/>
    <property type="evidence" value="ECO:0000315"/>
    <property type="project" value="AgBase"/>
</dbReference>
<dbReference type="GO" id="GO:0060283">
    <property type="term" value="P:negative regulation of oocyte development"/>
    <property type="evidence" value="ECO:0000314"/>
    <property type="project" value="UniProtKB"/>
</dbReference>
<dbReference type="GO" id="GO:0042327">
    <property type="term" value="P:positive regulation of phosphorylation"/>
    <property type="evidence" value="ECO:0000250"/>
    <property type="project" value="UniProtKB"/>
</dbReference>
<dbReference type="GO" id="GO:0080154">
    <property type="term" value="P:regulation of fertilization"/>
    <property type="evidence" value="ECO:0000250"/>
    <property type="project" value="UniProtKB"/>
</dbReference>
<dbReference type="GO" id="GO:0060631">
    <property type="term" value="P:regulation of meiosis I"/>
    <property type="evidence" value="ECO:0000314"/>
    <property type="project" value="UniProtKB"/>
</dbReference>
<dbReference type="FunFam" id="3.30.200.20:FF:000115">
    <property type="entry name" value="Wee1-like kinase 2"/>
    <property type="match status" value="1"/>
</dbReference>
<dbReference type="FunFam" id="1.10.510.10:FF:000217">
    <property type="entry name" value="Wee1-like protein kinase"/>
    <property type="match status" value="1"/>
</dbReference>
<dbReference type="Gene3D" id="3.30.200.20">
    <property type="entry name" value="Phosphorylase Kinase, domain 1"/>
    <property type="match status" value="1"/>
</dbReference>
<dbReference type="Gene3D" id="1.10.510.10">
    <property type="entry name" value="Transferase(Phosphotransferase) domain 1"/>
    <property type="match status" value="1"/>
</dbReference>
<dbReference type="InterPro" id="IPR050339">
    <property type="entry name" value="CC_SR_Kinase"/>
</dbReference>
<dbReference type="InterPro" id="IPR011009">
    <property type="entry name" value="Kinase-like_dom_sf"/>
</dbReference>
<dbReference type="InterPro" id="IPR000719">
    <property type="entry name" value="Prot_kinase_dom"/>
</dbReference>
<dbReference type="InterPro" id="IPR017441">
    <property type="entry name" value="Protein_kinase_ATP_BS"/>
</dbReference>
<dbReference type="InterPro" id="IPR008271">
    <property type="entry name" value="Ser/Thr_kinase_AS"/>
</dbReference>
<dbReference type="InterPro" id="IPR017164">
    <property type="entry name" value="Wee1-like_protein_kinase"/>
</dbReference>
<dbReference type="PANTHER" id="PTHR11042">
    <property type="entry name" value="EUKARYOTIC TRANSLATION INITIATION FACTOR 2-ALPHA KINASE EIF2-ALPHA KINASE -RELATED"/>
    <property type="match status" value="1"/>
</dbReference>
<dbReference type="PANTHER" id="PTHR11042:SF75">
    <property type="entry name" value="WEE1-LIKE PROTEIN KINASE 2"/>
    <property type="match status" value="1"/>
</dbReference>
<dbReference type="Pfam" id="PF00069">
    <property type="entry name" value="Pkinase"/>
    <property type="match status" value="1"/>
</dbReference>
<dbReference type="PIRSF" id="PIRSF037281">
    <property type="entry name" value="Wee1-like_protein_kinase"/>
    <property type="match status" value="1"/>
</dbReference>
<dbReference type="SMART" id="SM00220">
    <property type="entry name" value="S_TKc"/>
    <property type="match status" value="1"/>
</dbReference>
<dbReference type="SUPFAM" id="SSF56112">
    <property type="entry name" value="Protein kinase-like (PK-like)"/>
    <property type="match status" value="1"/>
</dbReference>
<dbReference type="PROSITE" id="PS00107">
    <property type="entry name" value="PROTEIN_KINASE_ATP"/>
    <property type="match status" value="1"/>
</dbReference>
<dbReference type="PROSITE" id="PS50011">
    <property type="entry name" value="PROTEIN_KINASE_DOM"/>
    <property type="match status" value="1"/>
</dbReference>
<dbReference type="PROSITE" id="PS00108">
    <property type="entry name" value="PROTEIN_KINASE_ST"/>
    <property type="match status" value="1"/>
</dbReference>
<organism>
    <name type="scientific">Sus scrofa</name>
    <name type="common">Pig</name>
    <dbReference type="NCBI Taxonomy" id="9823"/>
    <lineage>
        <taxon>Eukaryota</taxon>
        <taxon>Metazoa</taxon>
        <taxon>Chordata</taxon>
        <taxon>Craniata</taxon>
        <taxon>Vertebrata</taxon>
        <taxon>Euteleostomi</taxon>
        <taxon>Mammalia</taxon>
        <taxon>Eutheria</taxon>
        <taxon>Laurasiatheria</taxon>
        <taxon>Artiodactyla</taxon>
        <taxon>Suina</taxon>
        <taxon>Suidae</taxon>
        <taxon>Sus</taxon>
    </lineage>
</organism>
<comment type="function">
    <text evidence="6">Oocyte-specific protein tyrosine kinase that phosphorylates and inhibits CDK1 and acts as a key regulator of meiosis during both prophase I and metaphase II. Required to maintain meiotic arrest in oocytes during the germinal vesicle (GV) stage, a long period of quiescence at dictyate prophase I, by phosphorylating CDK1 at 'Tyr-15', leading to inhibit CDK1 activity and prevent meiotic reentry. Also required for metaphase II exit during egg activation by phosphorylating CDK1 at 'Tyr-15', to ensure exit from meiosis in oocytes and promote pronuclear formation.</text>
</comment>
<comment type="catalytic activity">
    <reaction evidence="4">
        <text>L-tyrosyl-[protein] + ATP = O-phospho-L-tyrosyl-[protein] + ADP + H(+)</text>
        <dbReference type="Rhea" id="RHEA:10596"/>
        <dbReference type="Rhea" id="RHEA-COMP:10136"/>
        <dbReference type="Rhea" id="RHEA-COMP:20101"/>
        <dbReference type="ChEBI" id="CHEBI:15378"/>
        <dbReference type="ChEBI" id="CHEBI:30616"/>
        <dbReference type="ChEBI" id="CHEBI:46858"/>
        <dbReference type="ChEBI" id="CHEBI:61978"/>
        <dbReference type="ChEBI" id="CHEBI:456216"/>
        <dbReference type="EC" id="2.7.10.2"/>
    </reaction>
</comment>
<comment type="subcellular location">
    <subcellularLocation>
        <location evidence="7">Nucleus</location>
    </subcellularLocation>
</comment>
<comment type="tissue specificity">
    <text evidence="6">Ovary-specific.</text>
</comment>
<comment type="developmental stage">
    <text evidence="6">Detected only in the oocytes throughout oocyte maturation period.</text>
</comment>
<comment type="PTM">
    <text evidence="7">Phosphorylation leads to increase its activity.</text>
</comment>
<comment type="miscellaneous">
    <text evidence="9">Continuous activation of WEE2 is a cause of meiotic failure of small oocytes. In mammals, oocytes with a diameter less than 80% of that of full-grown oocytes cannot start meiotic maturation (PubMed:19550110).</text>
</comment>
<comment type="similarity">
    <text evidence="3">Belongs to the protein kinase superfamily. Ser/Thr protein kinase family. WEE1 subfamily.</text>
</comment>
<comment type="sequence caution" evidence="8">
    <conflict type="erroneous initiation">
        <sequence resource="EMBL-CDS" id="BAF56108"/>
    </conflict>
    <text>Truncated N-terminus.</text>
</comment>
<protein>
    <recommendedName>
        <fullName>Wee1-like protein kinase 2</fullName>
        <ecNumber>2.7.10.2</ecNumber>
    </recommendedName>
    <alternativeName>
        <fullName>Wee1-like protein kinase 1B</fullName>
    </alternativeName>
    <alternativeName>
        <fullName>Wee1B kinase</fullName>
        <shortName>pWee1B</shortName>
        <shortName>pigWee1B</shortName>
    </alternativeName>
</protein>
<feature type="chain" id="PRO_0000409526" description="Wee1-like protein kinase 2">
    <location>
        <begin position="1"/>
        <end position="565"/>
    </location>
</feature>
<feature type="domain" description="Protein kinase" evidence="3">
    <location>
        <begin position="214"/>
        <end position="492"/>
    </location>
</feature>
<feature type="region of interest" description="Disordered" evidence="5">
    <location>
        <begin position="1"/>
        <end position="142"/>
    </location>
</feature>
<feature type="region of interest" description="Disordered" evidence="5">
    <location>
        <begin position="169"/>
        <end position="189"/>
    </location>
</feature>
<feature type="region of interest" description="Disordered" evidence="5">
    <location>
        <begin position="518"/>
        <end position="565"/>
    </location>
</feature>
<feature type="coiled-coil region" evidence="2">
    <location>
        <begin position="495"/>
        <end position="521"/>
    </location>
</feature>
<feature type="short sequence motif" description="Nuclear localization signal">
    <location>
        <begin position="173"/>
        <end position="175"/>
    </location>
</feature>
<feature type="short sequence motif" description="Nuclear export signal" evidence="1">
    <location>
        <begin position="317"/>
        <end position="331"/>
    </location>
</feature>
<feature type="compositionally biased region" description="Basic and acidic residues" evidence="5">
    <location>
        <begin position="1"/>
        <end position="12"/>
    </location>
</feature>
<feature type="compositionally biased region" description="Basic and acidic residues" evidence="5">
    <location>
        <begin position="26"/>
        <end position="52"/>
    </location>
</feature>
<feature type="compositionally biased region" description="Basic and acidic residues" evidence="5">
    <location>
        <begin position="178"/>
        <end position="189"/>
    </location>
</feature>
<feature type="compositionally biased region" description="Polar residues" evidence="5">
    <location>
        <begin position="521"/>
        <end position="534"/>
    </location>
</feature>
<feature type="compositionally biased region" description="Polar residues" evidence="5">
    <location>
        <begin position="553"/>
        <end position="565"/>
    </location>
</feature>
<feature type="active site" description="Proton acceptor" evidence="3 4">
    <location>
        <position position="341"/>
    </location>
</feature>
<feature type="binding site" evidence="3">
    <location>
        <begin position="220"/>
        <end position="228"/>
    </location>
    <ligand>
        <name>ATP</name>
        <dbReference type="ChEBI" id="CHEBI:30616"/>
    </ligand>
</feature>
<feature type="binding site" evidence="3">
    <location>
        <position position="243"/>
    </location>
    <ligand>
        <name>ATP</name>
        <dbReference type="ChEBI" id="CHEBI:30616"/>
    </ligand>
</feature>
<feature type="binding site" evidence="1">
    <location>
        <position position="346"/>
    </location>
    <ligand>
        <name>Mg(2+)</name>
        <dbReference type="ChEBI" id="CHEBI:18420"/>
    </ligand>
</feature>
<feature type="binding site" evidence="1">
    <location>
        <position position="382"/>
    </location>
    <ligand>
        <name>Mg(2+)</name>
        <dbReference type="ChEBI" id="CHEBI:18420"/>
    </ligand>
</feature>
<feature type="modified residue" description="Phosphoserine" evidence="7">
    <location>
        <position position="77"/>
    </location>
</feature>
<feature type="mutagenesis site" description="Abolishes phosphorylation and ability to maintain meiotic arrest in oocytes during the germinal vesicle (GV) stage." evidence="7">
    <original>S</original>
    <variation>A</variation>
    <location>
        <position position="77"/>
    </location>
</feature>
<feature type="mutagenesis site" description="Does not affect phosphorylation." evidence="7">
    <original>S</original>
    <variation>A</variation>
    <location>
        <position position="118"/>
    </location>
</feature>
<feature type="mutagenesis site" description="Does not affect phosphorylation." evidence="7">
    <original>S</original>
    <variation>A</variation>
    <location>
        <position position="133"/>
    </location>
</feature>
<feature type="mutagenesis site" description="Does not affect phosphorylation." evidence="7">
    <original>S</original>
    <variation>A</variation>
    <location>
        <position position="149"/>
    </location>
</feature>
<feature type="mutagenesis site" description="Abolishes nuclear localization." evidence="7">
    <original>RK</original>
    <variation>TT</variation>
    <location>
        <begin position="174"/>
        <end position="175"/>
    </location>
</feature>
<name>WEE2_PIG</name>
<evidence type="ECO:0000250" key="1"/>
<evidence type="ECO:0000255" key="2"/>
<evidence type="ECO:0000255" key="3">
    <source>
        <dbReference type="PROSITE-ProRule" id="PRU00159"/>
    </source>
</evidence>
<evidence type="ECO:0000255" key="4">
    <source>
        <dbReference type="PROSITE-ProRule" id="PRU10027"/>
    </source>
</evidence>
<evidence type="ECO:0000256" key="5">
    <source>
        <dbReference type="SAM" id="MobiDB-lite"/>
    </source>
</evidence>
<evidence type="ECO:0000269" key="6">
    <source>
    </source>
</evidence>
<evidence type="ECO:0000269" key="7">
    <source>
    </source>
</evidence>
<evidence type="ECO:0000305" key="8"/>
<evidence type="ECO:0000305" key="9">
    <source>
    </source>
</evidence>
<sequence>MGDNGDNKELKQKLNFSYSEEEQEDEGQKEAQESKKVQYHTPERCGHQDSEAKFTPPRTPLNHVCELSTPQVKDRASPDQGLRTPVSRPHTRPETPAPPDKSKPPPHCESPFTPRGHSSQSVISTGKLPSRGSKHLRLTPGPLTDEMTSLALVNINPFTPESYRRQFLKSNGKRKTRRDLEEAGPEEGKVEKGLPAKRCVLRETNMACRYEKEFLEVEKIGVGEFGTVYKCIKRLDGCVYAIKRSTKPVSGLSDENLAMHEVYAHSVLGHHPHVVRYYSSWAEDDHMMIQNEYCNGGSLQAAISENAKSGNHFQEPKLKDILLQISLGLKYIHNYGMVHMDIKPSNIFICHKIPSDSPVVPEEAENEADWFLSANVTYKIGDLGHVTSISEPQVEEGDSRFLAKEILQENYQHLPKADIFALGLTIAVAAGAEALPTNGTSWHHIREGQLPNIPQDLSKEFYNLLKDMIDPDPVARPSAAALTRSRVLCPSLGRTEELQQQLNLEKFKTATLERELKEVQRAQSSKEGQSSPGVTGTHTGSRSTRRLVGGKSAKSSSFTWGQSSP</sequence>